<organism>
    <name type="scientific">Yersinia pestis</name>
    <dbReference type="NCBI Taxonomy" id="632"/>
    <lineage>
        <taxon>Bacteria</taxon>
        <taxon>Pseudomonadati</taxon>
        <taxon>Pseudomonadota</taxon>
        <taxon>Gammaproteobacteria</taxon>
        <taxon>Enterobacterales</taxon>
        <taxon>Yersiniaceae</taxon>
        <taxon>Yersinia</taxon>
    </lineage>
</organism>
<feature type="signal peptide" evidence="2">
    <location>
        <begin position="1"/>
        <end position="25"/>
    </location>
</feature>
<feature type="chain" id="PRO_0000292820" description="sn-glycerol-3-phosphate-binding periplasmic protein UgpB">
    <location>
        <begin position="26"/>
        <end position="439"/>
    </location>
</feature>
<feature type="binding site" evidence="1">
    <location>
        <position position="67"/>
    </location>
    <ligand>
        <name>sn-glycerol 3-phosphate</name>
        <dbReference type="ChEBI" id="CHEBI:57597"/>
    </ligand>
</feature>
<feature type="binding site" evidence="1">
    <location>
        <position position="91"/>
    </location>
    <ligand>
        <name>sn-glycerol 3-phosphate</name>
        <dbReference type="ChEBI" id="CHEBI:57597"/>
    </ligand>
</feature>
<feature type="binding site" evidence="1">
    <location>
        <position position="146"/>
    </location>
    <ligand>
        <name>sn-glycerol 3-phosphate</name>
        <dbReference type="ChEBI" id="CHEBI:57597"/>
    </ligand>
</feature>
<feature type="binding site" evidence="1">
    <location>
        <position position="272"/>
    </location>
    <ligand>
        <name>sn-glycerol 3-phosphate</name>
        <dbReference type="ChEBI" id="CHEBI:57597"/>
    </ligand>
</feature>
<feature type="binding site" evidence="1">
    <location>
        <position position="309"/>
    </location>
    <ligand>
        <name>sn-glycerol 3-phosphate</name>
        <dbReference type="ChEBI" id="CHEBI:57597"/>
    </ligand>
</feature>
<feature type="binding site" evidence="1">
    <location>
        <position position="348"/>
    </location>
    <ligand>
        <name>sn-glycerol 3-phosphate</name>
        <dbReference type="ChEBI" id="CHEBI:57597"/>
    </ligand>
</feature>
<feature type="binding site" evidence="1">
    <location>
        <position position="399"/>
    </location>
    <ligand>
        <name>sn-glycerol 3-phosphate</name>
        <dbReference type="ChEBI" id="CHEBI:57597"/>
    </ligand>
</feature>
<comment type="function">
    <text evidence="1">Part of the ABC transporter complex UgpBAEC involved in sn-glycerol-3-phosphate (G3P) import. Binds G3P.</text>
</comment>
<comment type="subunit">
    <text evidence="1">The complex is composed of two ATP-binding proteins (UgpC), two transmembrane proteins (UgpA and UgpE) and a solute-binding protein (UgpB).</text>
</comment>
<comment type="subcellular location">
    <subcellularLocation>
        <location evidence="1">Periplasm</location>
    </subcellularLocation>
</comment>
<comment type="similarity">
    <text evidence="3">Belongs to the bacterial solute-binding protein 1 family.</text>
</comment>
<gene>
    <name type="primary">ugpB</name>
    <name type="ordered locus">YPO3796</name>
    <name type="ordered locus">y0434</name>
    <name type="ordered locus">YP_3253</name>
</gene>
<dbReference type="EMBL" id="AE009952">
    <property type="protein sequence ID" value="AAM84023.1"/>
    <property type="molecule type" value="Genomic_DNA"/>
</dbReference>
<dbReference type="EMBL" id="AE017042">
    <property type="protein sequence ID" value="AAS63421.1"/>
    <property type="molecule type" value="Genomic_DNA"/>
</dbReference>
<dbReference type="EMBL" id="AL590842">
    <property type="protein sequence ID" value="CAL22382.1"/>
    <property type="molecule type" value="Genomic_DNA"/>
</dbReference>
<dbReference type="PIR" id="AC0462">
    <property type="entry name" value="AC0462"/>
</dbReference>
<dbReference type="RefSeq" id="WP_002211520.1">
    <property type="nucleotide sequence ID" value="NZ_WUCM01000048.1"/>
</dbReference>
<dbReference type="RefSeq" id="YP_002348673.1">
    <property type="nucleotide sequence ID" value="NC_003143.1"/>
</dbReference>
<dbReference type="SMR" id="Q7CKV7"/>
<dbReference type="STRING" id="214092.YPO3796"/>
<dbReference type="PaxDb" id="214092-YPO3796"/>
<dbReference type="DNASU" id="1145381"/>
<dbReference type="EnsemblBacteria" id="AAS63421">
    <property type="protein sequence ID" value="AAS63421"/>
    <property type="gene ID" value="YP_3253"/>
</dbReference>
<dbReference type="GeneID" id="57974912"/>
<dbReference type="KEGG" id="ype:YPO3796"/>
<dbReference type="KEGG" id="ypk:y0434"/>
<dbReference type="KEGG" id="ypm:YP_3253"/>
<dbReference type="PATRIC" id="fig|214092.21.peg.4317"/>
<dbReference type="eggNOG" id="COG1653">
    <property type="taxonomic scope" value="Bacteria"/>
</dbReference>
<dbReference type="HOGENOM" id="CLU_031285_3_0_6"/>
<dbReference type="OMA" id="EIQWWHS"/>
<dbReference type="OrthoDB" id="4393730at2"/>
<dbReference type="Proteomes" id="UP000000815">
    <property type="component" value="Chromosome"/>
</dbReference>
<dbReference type="Proteomes" id="UP000001019">
    <property type="component" value="Chromosome"/>
</dbReference>
<dbReference type="Proteomes" id="UP000002490">
    <property type="component" value="Chromosome"/>
</dbReference>
<dbReference type="GO" id="GO:0030313">
    <property type="term" value="C:cell envelope"/>
    <property type="evidence" value="ECO:0007669"/>
    <property type="project" value="UniProtKB-ARBA"/>
</dbReference>
<dbReference type="GO" id="GO:0042597">
    <property type="term" value="C:periplasmic space"/>
    <property type="evidence" value="ECO:0007669"/>
    <property type="project" value="UniProtKB-SubCell"/>
</dbReference>
<dbReference type="GO" id="GO:0055085">
    <property type="term" value="P:transmembrane transport"/>
    <property type="evidence" value="ECO:0007669"/>
    <property type="project" value="InterPro"/>
</dbReference>
<dbReference type="CDD" id="cd14748">
    <property type="entry name" value="PBP2_UgpB"/>
    <property type="match status" value="1"/>
</dbReference>
<dbReference type="Gene3D" id="3.40.190.10">
    <property type="entry name" value="Periplasmic binding protein-like II"/>
    <property type="match status" value="2"/>
</dbReference>
<dbReference type="InterPro" id="IPR050490">
    <property type="entry name" value="Bact_solute-bd_prot1"/>
</dbReference>
<dbReference type="InterPro" id="IPR006059">
    <property type="entry name" value="SBP"/>
</dbReference>
<dbReference type="InterPro" id="IPR006061">
    <property type="entry name" value="SBP_1_CS"/>
</dbReference>
<dbReference type="NCBIfam" id="NF008211">
    <property type="entry name" value="PRK10974.1"/>
    <property type="match status" value="1"/>
</dbReference>
<dbReference type="PANTHER" id="PTHR43649">
    <property type="entry name" value="ARABINOSE-BINDING PROTEIN-RELATED"/>
    <property type="match status" value="1"/>
</dbReference>
<dbReference type="PANTHER" id="PTHR43649:SF31">
    <property type="entry name" value="SN-GLYCEROL-3-PHOSPHATE-BINDING PERIPLASMIC PROTEIN UGPB"/>
    <property type="match status" value="1"/>
</dbReference>
<dbReference type="Pfam" id="PF13416">
    <property type="entry name" value="SBP_bac_8"/>
    <property type="match status" value="1"/>
</dbReference>
<dbReference type="SUPFAM" id="SSF53850">
    <property type="entry name" value="Periplasmic binding protein-like II"/>
    <property type="match status" value="1"/>
</dbReference>
<dbReference type="PROSITE" id="PS01037">
    <property type="entry name" value="SBP_BACTERIAL_1"/>
    <property type="match status" value="1"/>
</dbReference>
<sequence length="439" mass="48574">MFNNSIHKVSICIALTLTFSANAMAVTEIPFWHSMEGELGKEVDSIADRFNQSQPDYKIVPVYKGNYEQSLAAGIAAFRSGKAPAILQVYEVGTATMMASKAIKPVYQVFKDANIDFDESVFVPTVAGYYTDSKTGRLLSQPFNSSTPVLYYNKEAFKKAGLDPEQPPKTWQELAADTAKLRAAGSSCGYASGWQGWIQIENFSAWHGQPIASRNNGFDGTDAVLEFNKPLQVKHIQLLSDMNKKGDFTYFGRKDESTSKFYNGDCAITTASSGSLASIRHYAKFNFGVGMMPYDADAKNAPQNAIIGGASLWVMDGKDKETYKGVAEFLQYLVKPEIAAEWHQKTGYLPITTAAYELTKQQGFYEQNPGADVATRQMLNKPPLPYTKGLRLGNMPQIRTVVDEELEAVWTAKKTPQAALDNSVKRGDVLLRRFEQANK</sequence>
<accession>Q7CKV7</accession>
<accession>Q74R31</accession>
<protein>
    <recommendedName>
        <fullName evidence="1">sn-glycerol-3-phosphate-binding periplasmic protein UgpB</fullName>
    </recommendedName>
</protein>
<evidence type="ECO:0000250" key="1">
    <source>
        <dbReference type="UniProtKB" id="P0AG80"/>
    </source>
</evidence>
<evidence type="ECO:0000255" key="2"/>
<evidence type="ECO:0000305" key="3"/>
<reference key="1">
    <citation type="journal article" date="2002" name="J. Bacteriol.">
        <title>Genome sequence of Yersinia pestis KIM.</title>
        <authorList>
            <person name="Deng W."/>
            <person name="Burland V."/>
            <person name="Plunkett G. III"/>
            <person name="Boutin A."/>
            <person name="Mayhew G.F."/>
            <person name="Liss P."/>
            <person name="Perna N.T."/>
            <person name="Rose D.J."/>
            <person name="Mau B."/>
            <person name="Zhou S."/>
            <person name="Schwartz D.C."/>
            <person name="Fetherston J.D."/>
            <person name="Lindler L.E."/>
            <person name="Brubaker R.R."/>
            <person name="Plano G.V."/>
            <person name="Straley S.C."/>
            <person name="McDonough K.A."/>
            <person name="Nilles M.L."/>
            <person name="Matson J.S."/>
            <person name="Blattner F.R."/>
            <person name="Perry R.D."/>
        </authorList>
    </citation>
    <scope>NUCLEOTIDE SEQUENCE [LARGE SCALE GENOMIC DNA]</scope>
    <source>
        <strain>KIM10+ / Biovar Mediaevalis</strain>
    </source>
</reference>
<reference key="2">
    <citation type="journal article" date="2001" name="Nature">
        <title>Genome sequence of Yersinia pestis, the causative agent of plague.</title>
        <authorList>
            <person name="Parkhill J."/>
            <person name="Wren B.W."/>
            <person name="Thomson N.R."/>
            <person name="Titball R.W."/>
            <person name="Holden M.T.G."/>
            <person name="Prentice M.B."/>
            <person name="Sebaihia M."/>
            <person name="James K.D."/>
            <person name="Churcher C.M."/>
            <person name="Mungall K.L."/>
            <person name="Baker S."/>
            <person name="Basham D."/>
            <person name="Bentley S.D."/>
            <person name="Brooks K."/>
            <person name="Cerdeno-Tarraga A.-M."/>
            <person name="Chillingworth T."/>
            <person name="Cronin A."/>
            <person name="Davies R.M."/>
            <person name="Davis P."/>
            <person name="Dougan G."/>
            <person name="Feltwell T."/>
            <person name="Hamlin N."/>
            <person name="Holroyd S."/>
            <person name="Jagels K."/>
            <person name="Karlyshev A.V."/>
            <person name="Leather S."/>
            <person name="Moule S."/>
            <person name="Oyston P.C.F."/>
            <person name="Quail M.A."/>
            <person name="Rutherford K.M."/>
            <person name="Simmonds M."/>
            <person name="Skelton J."/>
            <person name="Stevens K."/>
            <person name="Whitehead S."/>
            <person name="Barrell B.G."/>
        </authorList>
    </citation>
    <scope>NUCLEOTIDE SEQUENCE [LARGE SCALE GENOMIC DNA]</scope>
    <source>
        <strain>CO-92 / Biovar Orientalis</strain>
    </source>
</reference>
<reference key="3">
    <citation type="journal article" date="2004" name="DNA Res.">
        <title>Complete genome sequence of Yersinia pestis strain 91001, an isolate avirulent to humans.</title>
        <authorList>
            <person name="Song Y."/>
            <person name="Tong Z."/>
            <person name="Wang J."/>
            <person name="Wang L."/>
            <person name="Guo Z."/>
            <person name="Han Y."/>
            <person name="Zhang J."/>
            <person name="Pei D."/>
            <person name="Zhou D."/>
            <person name="Qin H."/>
            <person name="Pang X."/>
            <person name="Han Y."/>
            <person name="Zhai J."/>
            <person name="Li M."/>
            <person name="Cui B."/>
            <person name="Qi Z."/>
            <person name="Jin L."/>
            <person name="Dai R."/>
            <person name="Chen F."/>
            <person name="Li S."/>
            <person name="Ye C."/>
            <person name="Du Z."/>
            <person name="Lin W."/>
            <person name="Wang J."/>
            <person name="Yu J."/>
            <person name="Yang H."/>
            <person name="Wang J."/>
            <person name="Huang P."/>
            <person name="Yang R."/>
        </authorList>
    </citation>
    <scope>NUCLEOTIDE SEQUENCE [LARGE SCALE GENOMIC DNA]</scope>
    <source>
        <strain>91001 / Biovar Mediaevalis</strain>
    </source>
</reference>
<name>UGPB_YERPE</name>
<proteinExistence type="inferred from homology"/>
<keyword id="KW-0574">Periplasm</keyword>
<keyword id="KW-1185">Reference proteome</keyword>
<keyword id="KW-0732">Signal</keyword>
<keyword id="KW-0813">Transport</keyword>